<reference key="1">
    <citation type="journal article" date="2000" name="Nature">
        <title>Sequence and analysis of chromosome 1 of the plant Arabidopsis thaliana.</title>
        <authorList>
            <person name="Theologis A."/>
            <person name="Ecker J.R."/>
            <person name="Palm C.J."/>
            <person name="Federspiel N.A."/>
            <person name="Kaul S."/>
            <person name="White O."/>
            <person name="Alonso J."/>
            <person name="Altafi H."/>
            <person name="Araujo R."/>
            <person name="Bowman C.L."/>
            <person name="Brooks S.Y."/>
            <person name="Buehler E."/>
            <person name="Chan A."/>
            <person name="Chao Q."/>
            <person name="Chen H."/>
            <person name="Cheuk R.F."/>
            <person name="Chin C.W."/>
            <person name="Chung M.K."/>
            <person name="Conn L."/>
            <person name="Conway A.B."/>
            <person name="Conway A.R."/>
            <person name="Creasy T.H."/>
            <person name="Dewar K."/>
            <person name="Dunn P."/>
            <person name="Etgu P."/>
            <person name="Feldblyum T.V."/>
            <person name="Feng J.-D."/>
            <person name="Fong B."/>
            <person name="Fujii C.Y."/>
            <person name="Gill J.E."/>
            <person name="Goldsmith A.D."/>
            <person name="Haas B."/>
            <person name="Hansen N.F."/>
            <person name="Hughes B."/>
            <person name="Huizar L."/>
            <person name="Hunter J.L."/>
            <person name="Jenkins J."/>
            <person name="Johnson-Hopson C."/>
            <person name="Khan S."/>
            <person name="Khaykin E."/>
            <person name="Kim C.J."/>
            <person name="Koo H.L."/>
            <person name="Kremenetskaia I."/>
            <person name="Kurtz D.B."/>
            <person name="Kwan A."/>
            <person name="Lam B."/>
            <person name="Langin-Hooper S."/>
            <person name="Lee A."/>
            <person name="Lee J.M."/>
            <person name="Lenz C.A."/>
            <person name="Li J.H."/>
            <person name="Li Y.-P."/>
            <person name="Lin X."/>
            <person name="Liu S.X."/>
            <person name="Liu Z.A."/>
            <person name="Luros J.S."/>
            <person name="Maiti R."/>
            <person name="Marziali A."/>
            <person name="Militscher J."/>
            <person name="Miranda M."/>
            <person name="Nguyen M."/>
            <person name="Nierman W.C."/>
            <person name="Osborne B.I."/>
            <person name="Pai G."/>
            <person name="Peterson J."/>
            <person name="Pham P.K."/>
            <person name="Rizzo M."/>
            <person name="Rooney T."/>
            <person name="Rowley D."/>
            <person name="Sakano H."/>
            <person name="Salzberg S.L."/>
            <person name="Schwartz J.R."/>
            <person name="Shinn P."/>
            <person name="Southwick A.M."/>
            <person name="Sun H."/>
            <person name="Tallon L.J."/>
            <person name="Tambunga G."/>
            <person name="Toriumi M.J."/>
            <person name="Town C.D."/>
            <person name="Utterback T."/>
            <person name="Van Aken S."/>
            <person name="Vaysberg M."/>
            <person name="Vysotskaia V.S."/>
            <person name="Walker M."/>
            <person name="Wu D."/>
            <person name="Yu G."/>
            <person name="Fraser C.M."/>
            <person name="Venter J.C."/>
            <person name="Davis R.W."/>
        </authorList>
    </citation>
    <scope>NUCLEOTIDE SEQUENCE [LARGE SCALE GENOMIC DNA]</scope>
    <source>
        <strain>cv. Columbia</strain>
    </source>
</reference>
<reference key="2">
    <citation type="journal article" date="2017" name="Plant J.">
        <title>Araport11: a complete reannotation of the Arabidopsis thaliana reference genome.</title>
        <authorList>
            <person name="Cheng C.Y."/>
            <person name="Krishnakumar V."/>
            <person name="Chan A.P."/>
            <person name="Thibaud-Nissen F."/>
            <person name="Schobel S."/>
            <person name="Town C.D."/>
        </authorList>
    </citation>
    <scope>GENOME REANNOTATION</scope>
    <source>
        <strain>cv. Columbia</strain>
    </source>
</reference>
<reference key="3">
    <citation type="journal article" date="2003" name="Science">
        <title>Empirical analysis of transcriptional activity in the Arabidopsis genome.</title>
        <authorList>
            <person name="Yamada K."/>
            <person name="Lim J."/>
            <person name="Dale J.M."/>
            <person name="Chen H."/>
            <person name="Shinn P."/>
            <person name="Palm C.J."/>
            <person name="Southwick A.M."/>
            <person name="Wu H.C."/>
            <person name="Kim C.J."/>
            <person name="Nguyen M."/>
            <person name="Pham P.K."/>
            <person name="Cheuk R.F."/>
            <person name="Karlin-Newmann G."/>
            <person name="Liu S.X."/>
            <person name="Lam B."/>
            <person name="Sakano H."/>
            <person name="Wu T."/>
            <person name="Yu G."/>
            <person name="Miranda M."/>
            <person name="Quach H.L."/>
            <person name="Tripp M."/>
            <person name="Chang C.H."/>
            <person name="Lee J.M."/>
            <person name="Toriumi M.J."/>
            <person name="Chan M.M."/>
            <person name="Tang C.C."/>
            <person name="Onodera C.S."/>
            <person name="Deng J.M."/>
            <person name="Akiyama K."/>
            <person name="Ansari Y."/>
            <person name="Arakawa T."/>
            <person name="Banh J."/>
            <person name="Banno F."/>
            <person name="Bowser L."/>
            <person name="Brooks S.Y."/>
            <person name="Carninci P."/>
            <person name="Chao Q."/>
            <person name="Choy N."/>
            <person name="Enju A."/>
            <person name="Goldsmith A.D."/>
            <person name="Gurjal M."/>
            <person name="Hansen N.F."/>
            <person name="Hayashizaki Y."/>
            <person name="Johnson-Hopson C."/>
            <person name="Hsuan V.W."/>
            <person name="Iida K."/>
            <person name="Karnes M."/>
            <person name="Khan S."/>
            <person name="Koesema E."/>
            <person name="Ishida J."/>
            <person name="Jiang P.X."/>
            <person name="Jones T."/>
            <person name="Kawai J."/>
            <person name="Kamiya A."/>
            <person name="Meyers C."/>
            <person name="Nakajima M."/>
            <person name="Narusaka M."/>
            <person name="Seki M."/>
            <person name="Sakurai T."/>
            <person name="Satou M."/>
            <person name="Tamse R."/>
            <person name="Vaysberg M."/>
            <person name="Wallender E.K."/>
            <person name="Wong C."/>
            <person name="Yamamura Y."/>
            <person name="Yuan S."/>
            <person name="Shinozaki K."/>
            <person name="Davis R.W."/>
            <person name="Theologis A."/>
            <person name="Ecker J.R."/>
        </authorList>
    </citation>
    <scope>NUCLEOTIDE SEQUENCE [LARGE SCALE MRNA]</scope>
    <source>
        <strain>cv. Columbia</strain>
    </source>
</reference>
<reference key="4">
    <citation type="submission" date="2002-03" db="EMBL/GenBank/DDBJ databases">
        <title>Full-length cDNA from Arabidopsis thaliana.</title>
        <authorList>
            <person name="Brover V.V."/>
            <person name="Troukhan M.E."/>
            <person name="Alexandrov N.A."/>
            <person name="Lu Y.-P."/>
            <person name="Flavell R.B."/>
            <person name="Feldmann K.A."/>
        </authorList>
    </citation>
    <scope>NUCLEOTIDE SEQUENCE [LARGE SCALE MRNA]</scope>
</reference>
<reference key="5">
    <citation type="journal article" date="2009" name="Plant Physiol.">
        <title>Large-scale Arabidopsis phosphoproteome profiling reveals novel chloroplast kinase substrates and phosphorylation networks.</title>
        <authorList>
            <person name="Reiland S."/>
            <person name="Messerli G."/>
            <person name="Baerenfaller K."/>
            <person name="Gerrits B."/>
            <person name="Endler A."/>
            <person name="Grossmann J."/>
            <person name="Gruissem W."/>
            <person name="Baginsky S."/>
        </authorList>
    </citation>
    <scope>IDENTIFICATION BY MASS SPECTROMETRY [LARGE SCALE ANALYSIS]</scope>
</reference>
<reference key="6">
    <citation type="journal article" date="2011" name="PLoS ONE">
        <title>A J-like protein influences fatty acid composition of chloroplast lipids in Arabidopsis.</title>
        <authorList>
            <person name="Ajjawi I."/>
            <person name="Coku A."/>
            <person name="Froehlich J.E."/>
            <person name="Yang Y."/>
            <person name="Osteryoung K.W."/>
            <person name="Benning C."/>
            <person name="Last R.L."/>
        </authorList>
    </citation>
    <scope>FUNCTION</scope>
    <scope>DISRUPTION PHENOTYPE</scope>
    <scope>INTERACTION WITH ARC6</scope>
    <scope>SUBCELLULAR LOCATION</scope>
    <scope>TOPOLOGY</scope>
    <source>
        <strain>cv. Columbia</strain>
    </source>
</reference>
<protein>
    <recommendedName>
        <fullName evidence="3">Protein CHLOROPLAST J-LIKE DOMAIN 1, chloroplastic</fullName>
    </recommendedName>
</protein>
<comment type="function">
    <text evidence="2">Probably involved in the regulation of the fatty acid metabolic process in chloroplasts, especially chloroplastic galactolipids monogalactosyldiacylglycerol (MGDG) and digalactosyldiacylglycerol (DGDG).</text>
</comment>
<comment type="subunit">
    <text evidence="2">Interacts (via J-like domain) with ARC6 (via J domain).</text>
</comment>
<comment type="subcellular location">
    <subcellularLocation>
        <location evidence="2">Plastid</location>
        <location evidence="2">Chloroplast inner membrane</location>
        <topology evidence="1">Multi-pass membrane protein</topology>
    </subcellularLocation>
</comment>
<comment type="disruption phenotype">
    <text evidence="2">Altered fatty acid profiles with a slight increase of 16:1delta7 and 18:1delta9 leaf monounsaturated fatty acids and subtle decrease of 16:3 and 18:3 polyunsaturated fatty acids, chloroplastic galactolipids monogalactosyldiacylglycerol (MGDG) and digalactosyldiacylglycerol (DGDG) being the main lipid types affected (PubMed:22028775). Abnormally large chloroplasts (PubMed:22028775). The double mutant arc6 cjd1 exhibits both phenotypes of single mutants cjd1 and arc6 including altered fatty acid profiles and heterogeneous chloroplasts sizes and shapes, respectively (PubMed:22028775).</text>
</comment>
<comment type="sequence caution" evidence="4">
    <conflict type="erroneous gene model prediction">
        <sequence resource="EMBL-CDS" id="AAF99779"/>
    </conflict>
</comment>
<keyword id="KW-0150">Chloroplast</keyword>
<keyword id="KW-0472">Membrane</keyword>
<keyword id="KW-0934">Plastid</keyword>
<keyword id="KW-1001">Plastid inner membrane</keyword>
<keyword id="KW-1185">Reference proteome</keyword>
<keyword id="KW-0809">Transit peptide</keyword>
<keyword id="KW-0812">Transmembrane</keyword>
<keyword id="KW-1133">Transmembrane helix</keyword>
<dbReference type="EMBL" id="AC003981">
    <property type="protein sequence ID" value="AAF99779.1"/>
    <property type="status" value="ALT_SEQ"/>
    <property type="molecule type" value="Genomic_DNA"/>
</dbReference>
<dbReference type="EMBL" id="CP002684">
    <property type="protein sequence ID" value="AEE28325.1"/>
    <property type="molecule type" value="Genomic_DNA"/>
</dbReference>
<dbReference type="EMBL" id="AF370182">
    <property type="protein sequence ID" value="AAK43997.1"/>
    <property type="molecule type" value="mRNA"/>
</dbReference>
<dbReference type="EMBL" id="AY059140">
    <property type="protein sequence ID" value="AAL15246.1"/>
    <property type="molecule type" value="mRNA"/>
</dbReference>
<dbReference type="EMBL" id="BT000664">
    <property type="protein sequence ID" value="AAN31811.1"/>
    <property type="molecule type" value="mRNA"/>
</dbReference>
<dbReference type="EMBL" id="AY087461">
    <property type="protein sequence ID" value="AAM65006.1"/>
    <property type="molecule type" value="mRNA"/>
</dbReference>
<dbReference type="PIR" id="H86218">
    <property type="entry name" value="H86218"/>
</dbReference>
<dbReference type="PIR" id="T00717">
    <property type="entry name" value="T00717"/>
</dbReference>
<dbReference type="RefSeq" id="NP_563823.1">
    <property type="nucleotide sequence ID" value="NM_100737.4"/>
</dbReference>
<dbReference type="SMR" id="Q93WG3"/>
<dbReference type="FunCoup" id="Q93WG3">
    <property type="interactions" value="1277"/>
</dbReference>
<dbReference type="STRING" id="3702.Q93WG3"/>
<dbReference type="iPTMnet" id="Q93WG3"/>
<dbReference type="PaxDb" id="3702-AT1G08640.1"/>
<dbReference type="ProteomicsDB" id="187626"/>
<dbReference type="EnsemblPlants" id="AT1G08640.1">
    <property type="protein sequence ID" value="AT1G08640.1"/>
    <property type="gene ID" value="AT1G08640"/>
</dbReference>
<dbReference type="GeneID" id="837386"/>
<dbReference type="Gramene" id="AT1G08640.1">
    <property type="protein sequence ID" value="AT1G08640.1"/>
    <property type="gene ID" value="AT1G08640"/>
</dbReference>
<dbReference type="KEGG" id="ath:AT1G08640"/>
<dbReference type="Araport" id="AT1G08640"/>
<dbReference type="TAIR" id="AT1G08640">
    <property type="gene designation" value="CJD1"/>
</dbReference>
<dbReference type="eggNOG" id="ENOG502QQTX">
    <property type="taxonomic scope" value="Eukaryota"/>
</dbReference>
<dbReference type="HOGENOM" id="CLU_079739_0_0_1"/>
<dbReference type="InParanoid" id="Q93WG3"/>
<dbReference type="OMA" id="HCPKPRI"/>
<dbReference type="PhylomeDB" id="Q93WG3"/>
<dbReference type="PRO" id="PR:Q93WG3"/>
<dbReference type="Proteomes" id="UP000006548">
    <property type="component" value="Chromosome 1"/>
</dbReference>
<dbReference type="ExpressionAtlas" id="Q93WG3">
    <property type="expression patterns" value="baseline and differential"/>
</dbReference>
<dbReference type="GO" id="GO:0009507">
    <property type="term" value="C:chloroplast"/>
    <property type="evidence" value="ECO:0007005"/>
    <property type="project" value="TAIR"/>
</dbReference>
<dbReference type="GO" id="GO:0009941">
    <property type="term" value="C:chloroplast envelope"/>
    <property type="evidence" value="ECO:0007005"/>
    <property type="project" value="TAIR"/>
</dbReference>
<dbReference type="GO" id="GO:0009706">
    <property type="term" value="C:chloroplast inner membrane"/>
    <property type="evidence" value="ECO:0007669"/>
    <property type="project" value="UniProtKB-SubCell"/>
</dbReference>
<dbReference type="GO" id="GO:0031969">
    <property type="term" value="C:chloroplast membrane"/>
    <property type="evidence" value="ECO:0000314"/>
    <property type="project" value="TAIR"/>
</dbReference>
<dbReference type="GO" id="GO:0005576">
    <property type="term" value="C:extracellular region"/>
    <property type="evidence" value="ECO:0007005"/>
    <property type="project" value="TAIR"/>
</dbReference>
<dbReference type="GO" id="GO:0006631">
    <property type="term" value="P:fatty acid metabolic process"/>
    <property type="evidence" value="ECO:0000315"/>
    <property type="project" value="TAIR"/>
</dbReference>
<dbReference type="InterPro" id="IPR021788">
    <property type="entry name" value="CPP1-like"/>
</dbReference>
<dbReference type="PANTHER" id="PTHR33372">
    <property type="match status" value="1"/>
</dbReference>
<dbReference type="PANTHER" id="PTHR33372:SF5">
    <property type="entry name" value="PROTEIN CHLOROPLAST J-LIKE DOMAIN 1, CHLOROPLASTIC"/>
    <property type="match status" value="1"/>
</dbReference>
<dbReference type="Pfam" id="PF11833">
    <property type="entry name" value="CPP1-like"/>
    <property type="match status" value="1"/>
</dbReference>
<gene>
    <name evidence="3" type="primary">CJD1</name>
    <name evidence="6" type="ordered locus">At1g08640</name>
    <name evidence="7" type="ORF">F22O13.12</name>
</gene>
<proteinExistence type="evidence at protein level"/>
<evidence type="ECO:0000255" key="1"/>
<evidence type="ECO:0000269" key="2">
    <source>
    </source>
</evidence>
<evidence type="ECO:0000303" key="3">
    <source>
    </source>
</evidence>
<evidence type="ECO:0000305" key="4"/>
<evidence type="ECO:0000305" key="5">
    <source>
    </source>
</evidence>
<evidence type="ECO:0000312" key="6">
    <source>
        <dbReference type="Araport" id="AT1G08640"/>
    </source>
</evidence>
<evidence type="ECO:0000312" key="7">
    <source>
        <dbReference type="EMBL" id="AAF99779.1"/>
    </source>
</evidence>
<organism>
    <name type="scientific">Arabidopsis thaliana</name>
    <name type="common">Mouse-ear cress</name>
    <dbReference type="NCBI Taxonomy" id="3702"/>
    <lineage>
        <taxon>Eukaryota</taxon>
        <taxon>Viridiplantae</taxon>
        <taxon>Streptophyta</taxon>
        <taxon>Embryophyta</taxon>
        <taxon>Tracheophyta</taxon>
        <taxon>Spermatophyta</taxon>
        <taxon>Magnoliopsida</taxon>
        <taxon>eudicotyledons</taxon>
        <taxon>Gunneridae</taxon>
        <taxon>Pentapetalae</taxon>
        <taxon>rosids</taxon>
        <taxon>malvids</taxon>
        <taxon>Brassicales</taxon>
        <taxon>Brassicaceae</taxon>
        <taxon>Camelineae</taxon>
        <taxon>Arabidopsis</taxon>
    </lineage>
</organism>
<accession>Q93WG3</accession>
<accession>Q8H167</accession>
<accession>Q8LB27</accession>
<accession>Q9FRS1</accession>
<sequence>MAPALSTSCSSVMAFSTSNALRYHHPQISLRNSLRAPKSPSFVRLPLGKVLQSRIVIRAASSAAGNPQSDADFNPYEVLGVNPIEGFDKIKQTYGRKLKDAQRSGDEATAALLEKAYDKLMYAQLMNRKKGVTFGSFKVSKDIKYADKQPIIPWGPRFSRSSKNDMLINLAISVVFSAWIAIKRNVEYKPLQFMSFVFVYRIFEKLKSFEAPSSPIYNEEGEESGRGLRMGKRLLRSLSLVFGSILLASLAYTGFLNGIEYMGYSIPMVLYNNQELIVTASSAFMLYVIASFYR</sequence>
<name>CJD1_ARATH</name>
<feature type="transit peptide" description="Chloroplast" evidence="1">
    <location>
        <begin position="1"/>
        <end position="58"/>
    </location>
</feature>
<feature type="chain" id="PRO_0000454659" description="Protein CHLOROPLAST J-LIKE DOMAIN 1, chloroplastic">
    <location>
        <begin position="59"/>
        <end position="294"/>
    </location>
</feature>
<feature type="topological domain" description="Stromal" evidence="5">
    <location>
        <begin position="59"/>
        <end position="164"/>
    </location>
</feature>
<feature type="transmembrane region" description="Helical" evidence="1">
    <location>
        <begin position="165"/>
        <end position="182"/>
    </location>
</feature>
<feature type="topological domain" description="Chloroplast intermembrane" evidence="5">
    <location>
        <begin position="183"/>
        <end position="233"/>
    </location>
</feature>
<feature type="transmembrane region" description="Helical" evidence="1">
    <location>
        <begin position="234"/>
        <end position="256"/>
    </location>
</feature>
<feature type="topological domain" description="Stromal" evidence="5">
    <location>
        <begin position="257"/>
        <end position="275"/>
    </location>
</feature>
<feature type="transmembrane region" description="Helical" evidence="1">
    <location>
        <begin position="276"/>
        <end position="293"/>
    </location>
</feature>
<feature type="topological domain" description="Chloroplast intermembrane" evidence="5">
    <location>
        <position position="294"/>
    </location>
</feature>
<feature type="region of interest" description="J-like domain" evidence="3">
    <location>
        <begin position="74"/>
        <end position="152"/>
    </location>
</feature>
<feature type="sequence conflict" description="In Ref. 4; AAM65006." evidence="4" ref="4">
    <original>E</original>
    <variation>K</variation>
    <location>
        <position position="85"/>
    </location>
</feature>
<feature type="sequence conflict" description="In Ref. 3; AAN31811." evidence="4" ref="3">
    <original>M</original>
    <variation>I</variation>
    <location>
        <position position="285"/>
    </location>
</feature>